<sequence length="289" mass="31746">MAASTPLLSRGTLIKQGAEAKVYALPSLFPEPTTYHPGSSSSFSAASPTPVILKHRFTKTYRHPTLDAYLTSQRLTFEARALARAAKAGVTVPKVVWVDEKAGVIGMERIEGWSVREILGGGAEGEVEVIEEQEIEEDVENKAEDSAVREEPEGPESEGLKALKNLGVTQEHLMRSIGAALARLHKTMIIHGDLTTSNMMVRLTPGGSGPYEIVLIDFGLSSQAQFPENYAVDLYVLERAFASTHPRSEKLYAGVLETYAEGLGEKKWKPIQIKLKDVRRRGRKRDMTG</sequence>
<dbReference type="EC" id="3.6.-.-" evidence="2"/>
<dbReference type="EC" id="2.7.11.1" evidence="1"/>
<dbReference type="EMBL" id="AE017351">
    <property type="protein sequence ID" value="AAW46242.2"/>
    <property type="status" value="ALT_INIT"/>
    <property type="molecule type" value="Genomic_DNA"/>
</dbReference>
<dbReference type="RefSeq" id="XP_567759.1">
    <property type="nucleotide sequence ID" value="XM_567759.1"/>
</dbReference>
<dbReference type="SMR" id="P0CP72"/>
<dbReference type="FunCoup" id="P0CP72">
    <property type="interactions" value="246"/>
</dbReference>
<dbReference type="STRING" id="214684.P0CP72"/>
<dbReference type="PaxDb" id="214684-P0CP72"/>
<dbReference type="InParanoid" id="P0CP72"/>
<dbReference type="Proteomes" id="UP000002149">
    <property type="component" value="Chromosome 11"/>
</dbReference>
<dbReference type="GO" id="GO:0000781">
    <property type="term" value="C:chromosome, telomeric region"/>
    <property type="evidence" value="ECO:0007669"/>
    <property type="project" value="UniProtKB-SubCell"/>
</dbReference>
<dbReference type="GO" id="GO:0005829">
    <property type="term" value="C:cytosol"/>
    <property type="evidence" value="ECO:0000318"/>
    <property type="project" value="GO_Central"/>
</dbReference>
<dbReference type="GO" id="GO:0000408">
    <property type="term" value="C:EKC/KEOPS complex"/>
    <property type="evidence" value="ECO:0000318"/>
    <property type="project" value="GO_Central"/>
</dbReference>
<dbReference type="GO" id="GO:0005634">
    <property type="term" value="C:nucleus"/>
    <property type="evidence" value="ECO:0000318"/>
    <property type="project" value="GO_Central"/>
</dbReference>
<dbReference type="GO" id="GO:0005524">
    <property type="term" value="F:ATP binding"/>
    <property type="evidence" value="ECO:0007669"/>
    <property type="project" value="UniProtKB-KW"/>
</dbReference>
<dbReference type="GO" id="GO:0016787">
    <property type="term" value="F:hydrolase activity"/>
    <property type="evidence" value="ECO:0007669"/>
    <property type="project" value="UniProtKB-KW"/>
</dbReference>
<dbReference type="GO" id="GO:0106310">
    <property type="term" value="F:protein serine kinase activity"/>
    <property type="evidence" value="ECO:0007669"/>
    <property type="project" value="RHEA"/>
</dbReference>
<dbReference type="GO" id="GO:0004674">
    <property type="term" value="F:protein serine/threonine kinase activity"/>
    <property type="evidence" value="ECO:0000318"/>
    <property type="project" value="GO_Central"/>
</dbReference>
<dbReference type="GO" id="GO:0008033">
    <property type="term" value="P:tRNA processing"/>
    <property type="evidence" value="ECO:0007669"/>
    <property type="project" value="UniProtKB-KW"/>
</dbReference>
<dbReference type="GO" id="GO:0070525">
    <property type="term" value="P:tRNA threonylcarbamoyladenosine metabolic process"/>
    <property type="evidence" value="ECO:0000318"/>
    <property type="project" value="GO_Central"/>
</dbReference>
<dbReference type="FunFam" id="3.30.200.20:FF:000201">
    <property type="entry name" value="TP53-regulating kinase isoform X1"/>
    <property type="match status" value="1"/>
</dbReference>
<dbReference type="FunFam" id="1.10.510.10:FF:000323">
    <property type="entry name" value="TP53-regulating kinase, putative"/>
    <property type="match status" value="1"/>
</dbReference>
<dbReference type="Gene3D" id="3.30.200.20">
    <property type="entry name" value="Phosphorylase Kinase, domain 1"/>
    <property type="match status" value="1"/>
</dbReference>
<dbReference type="Gene3D" id="1.10.510.10">
    <property type="entry name" value="Transferase(Phosphotransferase) domain 1"/>
    <property type="match status" value="1"/>
</dbReference>
<dbReference type="InterPro" id="IPR004119">
    <property type="entry name" value="EcKL"/>
</dbReference>
<dbReference type="InterPro" id="IPR011009">
    <property type="entry name" value="Kinase-like_dom_sf"/>
</dbReference>
<dbReference type="InterPro" id="IPR000719">
    <property type="entry name" value="Prot_kinase_dom"/>
</dbReference>
<dbReference type="InterPro" id="IPR008266">
    <property type="entry name" value="Tyr_kinase_AS"/>
</dbReference>
<dbReference type="PANTHER" id="PTHR12209:SF0">
    <property type="entry name" value="EKC_KEOPS COMPLEX SUBUNIT TP53RK"/>
    <property type="match status" value="1"/>
</dbReference>
<dbReference type="PANTHER" id="PTHR12209">
    <property type="entry name" value="NON-SPECIFIC SERINE/THREONINE PROTEIN KINASE"/>
    <property type="match status" value="1"/>
</dbReference>
<dbReference type="Pfam" id="PF02958">
    <property type="entry name" value="EcKL"/>
    <property type="match status" value="1"/>
</dbReference>
<dbReference type="SUPFAM" id="SSF56112">
    <property type="entry name" value="Protein kinase-like (PK-like)"/>
    <property type="match status" value="1"/>
</dbReference>
<dbReference type="PROSITE" id="PS50011">
    <property type="entry name" value="PROTEIN_KINASE_DOM"/>
    <property type="match status" value="1"/>
</dbReference>
<dbReference type="PROSITE" id="PS00109">
    <property type="entry name" value="PROTEIN_KINASE_TYR"/>
    <property type="match status" value="1"/>
</dbReference>
<comment type="function">
    <text evidence="1">Component of the EKC/KEOPS complex that is required for the formation of a threonylcarbamoyl group on adenosine at position 37 (t(6)A37) in tRNAs that read codons beginning with adenine. The complex is probably involved in the transfer of the threonylcarbamoyl moiety of threonylcarbamoyl-AMP (TC-AMP) to the N6 group of A37. BUD32 has ATPase activity in the context of the EKC/KEOPS complex and likely plays a supporting role to the catalytic subunit KAE1. The EKC/KEOPS complex also promotes both telomere uncapping and telomere elongation. The complex is required for efficient recruitment of transcriptional coactivators.</text>
</comment>
<comment type="catalytic activity">
    <reaction evidence="1">
        <text>L-seryl-[protein] + ATP = O-phospho-L-seryl-[protein] + ADP + H(+)</text>
        <dbReference type="Rhea" id="RHEA:17989"/>
        <dbReference type="Rhea" id="RHEA-COMP:9863"/>
        <dbReference type="Rhea" id="RHEA-COMP:11604"/>
        <dbReference type="ChEBI" id="CHEBI:15378"/>
        <dbReference type="ChEBI" id="CHEBI:29999"/>
        <dbReference type="ChEBI" id="CHEBI:30616"/>
        <dbReference type="ChEBI" id="CHEBI:83421"/>
        <dbReference type="ChEBI" id="CHEBI:456216"/>
        <dbReference type="EC" id="2.7.11.1"/>
    </reaction>
</comment>
<comment type="catalytic activity">
    <reaction evidence="1">
        <text>L-threonyl-[protein] + ATP = O-phospho-L-threonyl-[protein] + ADP + H(+)</text>
        <dbReference type="Rhea" id="RHEA:46608"/>
        <dbReference type="Rhea" id="RHEA-COMP:11060"/>
        <dbReference type="Rhea" id="RHEA-COMP:11605"/>
        <dbReference type="ChEBI" id="CHEBI:15378"/>
        <dbReference type="ChEBI" id="CHEBI:30013"/>
        <dbReference type="ChEBI" id="CHEBI:30616"/>
        <dbReference type="ChEBI" id="CHEBI:61977"/>
        <dbReference type="ChEBI" id="CHEBI:456216"/>
        <dbReference type="EC" id="2.7.11.1"/>
    </reaction>
</comment>
<comment type="subunit">
    <text evidence="1">Component of the EKC/KEOPS complex composed of at least BUD32, CGI121, GON7, KAE1 and PCC1; the whole complex dimerizes.</text>
</comment>
<comment type="subcellular location">
    <subcellularLocation>
        <location evidence="1">Cytoplasm</location>
    </subcellularLocation>
    <subcellularLocation>
        <location evidence="1">Nucleus</location>
    </subcellularLocation>
    <subcellularLocation>
        <location evidence="1">Chromosome</location>
        <location evidence="1">Telomere</location>
    </subcellularLocation>
</comment>
<comment type="domain">
    <text evidence="1 2">This protein is considered an atypical serine/threonine kinase, because it lacks the conventional structural elements necessary for the substrate recognition as well as a lysine residue that in all other serine/threonine kinases participates in the catalytic event (By similarity). BUD32 has protein kinase activity in vitro, but in the context of the EKC/KEOPS complex, the catalytic subunit KAE1 switches the activity of BUD32 from kinase into ATPase (By similarity).</text>
</comment>
<comment type="similarity">
    <text evidence="6">Belongs to the protein kinase superfamily. BUD32 family.</text>
</comment>
<comment type="sequence caution" evidence="6">
    <conflict type="erroneous initiation">
        <sequence resource="EMBL-CDS" id="AAW46242"/>
    </conflict>
    <text>Extended N-terminus.</text>
</comment>
<proteinExistence type="inferred from homology"/>
<organism>
    <name type="scientific">Cryptococcus neoformans var. neoformans serotype D (strain JEC21 / ATCC MYA-565)</name>
    <name type="common">Filobasidiella neoformans</name>
    <dbReference type="NCBI Taxonomy" id="214684"/>
    <lineage>
        <taxon>Eukaryota</taxon>
        <taxon>Fungi</taxon>
        <taxon>Dikarya</taxon>
        <taxon>Basidiomycota</taxon>
        <taxon>Agaricomycotina</taxon>
        <taxon>Tremellomycetes</taxon>
        <taxon>Tremellales</taxon>
        <taxon>Cryptococcaceae</taxon>
        <taxon>Cryptococcus</taxon>
        <taxon>Cryptococcus neoformans species complex</taxon>
    </lineage>
</organism>
<protein>
    <recommendedName>
        <fullName>EKC/KEOPS complex subunit BUD32</fullName>
        <ecNumber evidence="2">3.6.-.-</ecNumber>
    </recommendedName>
    <alternativeName>
        <fullName>Atypical serine/threonine protein kinase BUD32</fullName>
        <ecNumber evidence="1">2.7.11.1</ecNumber>
    </alternativeName>
</protein>
<feature type="chain" id="PRO_0000278912" description="EKC/KEOPS complex subunit BUD32">
    <location>
        <begin position="1"/>
        <end position="289"/>
    </location>
</feature>
<feature type="domain" description="Protein kinase" evidence="3">
    <location>
        <begin position="8"/>
        <end position="289"/>
    </location>
</feature>
<feature type="region of interest" description="Disordered" evidence="5">
    <location>
        <begin position="134"/>
        <end position="158"/>
    </location>
</feature>
<feature type="compositionally biased region" description="Basic and acidic residues" evidence="5">
    <location>
        <begin position="140"/>
        <end position="152"/>
    </location>
</feature>
<feature type="active site" description="Proton acceptor" evidence="3 4">
    <location>
        <position position="193"/>
    </location>
</feature>
<feature type="binding site" evidence="3">
    <location>
        <begin position="14"/>
        <end position="22"/>
    </location>
    <ligand>
        <name>ATP</name>
        <dbReference type="ChEBI" id="CHEBI:30616"/>
    </ligand>
</feature>
<feature type="binding site" evidence="3">
    <location>
        <position position="54"/>
    </location>
    <ligand>
        <name>ATP</name>
        <dbReference type="ChEBI" id="CHEBI:30616"/>
    </ligand>
</feature>
<name>BUD32_CRYNJ</name>
<accession>P0CP72</accession>
<accession>Q55K29</accession>
<accession>Q5K9H0</accession>
<evidence type="ECO:0000250" key="1">
    <source>
        <dbReference type="UniProtKB" id="P53323"/>
    </source>
</evidence>
<evidence type="ECO:0000250" key="2">
    <source>
        <dbReference type="UniProtKB" id="Q9UYB9"/>
    </source>
</evidence>
<evidence type="ECO:0000255" key="3">
    <source>
        <dbReference type="PROSITE-ProRule" id="PRU00159"/>
    </source>
</evidence>
<evidence type="ECO:0000255" key="4">
    <source>
        <dbReference type="PROSITE-ProRule" id="PRU10028"/>
    </source>
</evidence>
<evidence type="ECO:0000256" key="5">
    <source>
        <dbReference type="SAM" id="MobiDB-lite"/>
    </source>
</evidence>
<evidence type="ECO:0000305" key="6"/>
<gene>
    <name type="primary">BUD32</name>
    <name type="ordered locus">CNK01970</name>
</gene>
<reference key="1">
    <citation type="journal article" date="2005" name="Science">
        <title>The genome of the basidiomycetous yeast and human pathogen Cryptococcus neoformans.</title>
        <authorList>
            <person name="Loftus B.J."/>
            <person name="Fung E."/>
            <person name="Roncaglia P."/>
            <person name="Rowley D."/>
            <person name="Amedeo P."/>
            <person name="Bruno D."/>
            <person name="Vamathevan J."/>
            <person name="Miranda M."/>
            <person name="Anderson I.J."/>
            <person name="Fraser J.A."/>
            <person name="Allen J.E."/>
            <person name="Bosdet I.E."/>
            <person name="Brent M.R."/>
            <person name="Chiu R."/>
            <person name="Doering T.L."/>
            <person name="Donlin M.J."/>
            <person name="D'Souza C.A."/>
            <person name="Fox D.S."/>
            <person name="Grinberg V."/>
            <person name="Fu J."/>
            <person name="Fukushima M."/>
            <person name="Haas B.J."/>
            <person name="Huang J.C."/>
            <person name="Janbon G."/>
            <person name="Jones S.J.M."/>
            <person name="Koo H.L."/>
            <person name="Krzywinski M.I."/>
            <person name="Kwon-Chung K.J."/>
            <person name="Lengeler K.B."/>
            <person name="Maiti R."/>
            <person name="Marra M.A."/>
            <person name="Marra R.E."/>
            <person name="Mathewson C.A."/>
            <person name="Mitchell T.G."/>
            <person name="Pertea M."/>
            <person name="Riggs F.R."/>
            <person name="Salzberg S.L."/>
            <person name="Schein J.E."/>
            <person name="Shvartsbeyn A."/>
            <person name="Shin H."/>
            <person name="Shumway M."/>
            <person name="Specht C.A."/>
            <person name="Suh B.B."/>
            <person name="Tenney A."/>
            <person name="Utterback T.R."/>
            <person name="Wickes B.L."/>
            <person name="Wortman J.R."/>
            <person name="Wye N.H."/>
            <person name="Kronstad J.W."/>
            <person name="Lodge J.K."/>
            <person name="Heitman J."/>
            <person name="Davis R.W."/>
            <person name="Fraser C.M."/>
            <person name="Hyman R.W."/>
        </authorList>
    </citation>
    <scope>NUCLEOTIDE SEQUENCE [LARGE SCALE GENOMIC DNA]</scope>
    <source>
        <strain>JEC21 / ATCC MYA-565</strain>
    </source>
</reference>
<keyword id="KW-0010">Activator</keyword>
<keyword id="KW-0067">ATP-binding</keyword>
<keyword id="KW-0158">Chromosome</keyword>
<keyword id="KW-0963">Cytoplasm</keyword>
<keyword id="KW-0378">Hydrolase</keyword>
<keyword id="KW-0418">Kinase</keyword>
<keyword id="KW-0547">Nucleotide-binding</keyword>
<keyword id="KW-0539">Nucleus</keyword>
<keyword id="KW-0597">Phosphoprotein</keyword>
<keyword id="KW-1185">Reference proteome</keyword>
<keyword id="KW-0723">Serine/threonine-protein kinase</keyword>
<keyword id="KW-0779">Telomere</keyword>
<keyword id="KW-0804">Transcription</keyword>
<keyword id="KW-0805">Transcription regulation</keyword>
<keyword id="KW-0808">Transferase</keyword>
<keyword id="KW-0819">tRNA processing</keyword>